<gene>
    <name type="primary">BAGE</name>
    <name type="synonym">BAGE1</name>
</gene>
<organism>
    <name type="scientific">Homo sapiens</name>
    <name type="common">Human</name>
    <dbReference type="NCBI Taxonomy" id="9606"/>
    <lineage>
        <taxon>Eukaryota</taxon>
        <taxon>Metazoa</taxon>
        <taxon>Chordata</taxon>
        <taxon>Craniata</taxon>
        <taxon>Vertebrata</taxon>
        <taxon>Euteleostomi</taxon>
        <taxon>Mammalia</taxon>
        <taxon>Eutheria</taxon>
        <taxon>Euarchontoglires</taxon>
        <taxon>Primates</taxon>
        <taxon>Haplorrhini</taxon>
        <taxon>Catarrhini</taxon>
        <taxon>Hominidae</taxon>
        <taxon>Homo</taxon>
    </lineage>
</organism>
<feature type="signal peptide" evidence="1">
    <location>
        <begin position="1"/>
        <end position="17"/>
    </location>
</feature>
<feature type="chain" id="PRO_0000020774" description="B melanoma antigen 1">
    <location>
        <begin position="18"/>
        <end position="43"/>
    </location>
</feature>
<keyword id="KW-0025">Alternative splicing</keyword>
<keyword id="KW-1185">Reference proteome</keyword>
<keyword id="KW-0964">Secreted</keyword>
<keyword id="KW-0732">Signal</keyword>
<dbReference type="EMBL" id="U19180">
    <property type="protein sequence ID" value="AAC50123.1"/>
    <property type="molecule type" value="mRNA"/>
</dbReference>
<dbReference type="EMBL" id="AF499647">
    <property type="protein sequence ID" value="AAP30743.1"/>
    <property type="molecule type" value="Genomic_DNA"/>
</dbReference>
<dbReference type="EMBL" id="AF527550">
    <property type="protein sequence ID" value="AAO32670.1"/>
    <property type="molecule type" value="mRNA"/>
</dbReference>
<dbReference type="EMBL" id="AF527551">
    <property type="protein sequence ID" value="AAO32671.1"/>
    <property type="molecule type" value="mRNA"/>
</dbReference>
<dbReference type="EMBL" id="AF527552">
    <property type="protein sequence ID" value="AAO32672.1"/>
    <property type="molecule type" value="mRNA"/>
</dbReference>
<dbReference type="EMBL" id="AF527553">
    <property type="protein sequence ID" value="AAO32673.1"/>
    <property type="molecule type" value="mRNA"/>
</dbReference>
<dbReference type="EMBL" id="AF527554">
    <property type="protein sequence ID" value="AAO32674.1"/>
    <property type="molecule type" value="mRNA"/>
</dbReference>
<dbReference type="EMBL" id="BC107038">
    <property type="protein sequence ID" value="AAI07039.1"/>
    <property type="molecule type" value="mRNA"/>
</dbReference>
<dbReference type="RefSeq" id="NP_001178.1">
    <molecule id="Q13072-1"/>
    <property type="nucleotide sequence ID" value="NM_001187.1"/>
</dbReference>
<dbReference type="BioGRID" id="107050">
    <property type="interactions" value="2"/>
</dbReference>
<dbReference type="IntAct" id="Q13072">
    <property type="interactions" value="5"/>
</dbReference>
<dbReference type="BioMuta" id="HGNC:942"/>
<dbReference type="DMDM" id="5915765"/>
<dbReference type="MassIVE" id="Q13072"/>
<dbReference type="DNASU" id="574"/>
<dbReference type="GeneID" id="574"/>
<dbReference type="KEGG" id="hsa:574"/>
<dbReference type="AGR" id="HGNC:942"/>
<dbReference type="CTD" id="574"/>
<dbReference type="DisGeNET" id="574"/>
<dbReference type="GeneCards" id="BAGE"/>
<dbReference type="HGNC" id="HGNC:942">
    <property type="gene designation" value="BAGE"/>
</dbReference>
<dbReference type="MIM" id="605167">
    <property type="type" value="gene"/>
</dbReference>
<dbReference type="neXtProt" id="NX_Q13072"/>
<dbReference type="PharmGKB" id="PA25242"/>
<dbReference type="InParanoid" id="Q13072"/>
<dbReference type="PhylomeDB" id="Q13072"/>
<dbReference type="PathwayCommons" id="Q13072"/>
<dbReference type="SignaLink" id="Q13072"/>
<dbReference type="BioGRID-ORCS" id="574">
    <property type="hits" value="13 hits in 110 CRISPR screens"/>
</dbReference>
<dbReference type="GenomeRNAi" id="574"/>
<dbReference type="Pharos" id="Q13072">
    <property type="development level" value="Tdark"/>
</dbReference>
<dbReference type="PRO" id="PR:Q13072"/>
<dbReference type="Proteomes" id="UP000005640">
    <property type="component" value="Unplaced"/>
</dbReference>
<dbReference type="GO" id="GO:0005576">
    <property type="term" value="C:extracellular region"/>
    <property type="evidence" value="ECO:0007669"/>
    <property type="project" value="UniProtKB-SubCell"/>
</dbReference>
<dbReference type="InterPro" id="IPR012530">
    <property type="entry name" value="BAGE-like"/>
</dbReference>
<dbReference type="Pfam" id="PF08180">
    <property type="entry name" value="BAGE"/>
    <property type="match status" value="1"/>
</dbReference>
<sequence>MAARAVFLALSAQLLQARLMKEESPVVSWRLEPEDGTALCFIF</sequence>
<name>BAGE1_HUMAN</name>
<reference key="1">
    <citation type="journal article" date="1995" name="Immunity">
        <title>BAGE: a new gene encoding an antigen recognized on human melanomas by cytolytic T lymphocytes.</title>
        <authorList>
            <person name="Boel P."/>
            <person name="Wildmann C."/>
            <person name="Sensi M.L."/>
            <person name="Brasseur R."/>
            <person name="Renauld J.-C."/>
            <person name="Coulie P."/>
            <person name="Boon T."/>
            <person name="van der Bruggen P."/>
        </authorList>
    </citation>
    <scope>NUCLEOTIDE SEQUENCE [MRNA] (ISOFORM 1)</scope>
    <source>
        <tissue>Melanoma</tissue>
    </source>
</reference>
<reference key="2">
    <citation type="journal article" date="2004" name="Genome Res.">
        <title>The status, quality, and expansion of the NIH full-length cDNA project: the Mammalian Gene Collection (MGC).</title>
        <authorList>
            <consortium name="The MGC Project Team"/>
        </authorList>
    </citation>
    <scope>NUCLEOTIDE SEQUENCE [LARGE SCALE MRNA] (ISOFORM 1)</scope>
</reference>
<reference key="3">
    <citation type="journal article" date="2002" name="Eur. J. Hum. Genet.">
        <title>New BAGE (B melanoma antigen) genes mapping to the juxtacentromeric regions of human chromosomes 13 and 21 have a cancer/testis expression profile.</title>
        <authorList>
            <person name="Ruault M."/>
            <person name="van der Bruggen P."/>
            <person name="Brun M.-E."/>
            <person name="Boyle S."/>
            <person name="Roizes G."/>
            <person name="De Sario A."/>
        </authorList>
    </citation>
    <scope>ALTERNATIVE SPLICING</scope>
</reference>
<proteinExistence type="evidence at protein level"/>
<evidence type="ECO:0000255" key="1"/>
<evidence type="ECO:0000269" key="2">
    <source>
    </source>
</evidence>
<evidence type="ECO:0000305" key="3"/>
<protein>
    <recommendedName>
        <fullName>B melanoma antigen 1</fullName>
        <shortName>B melanoma antigen</shortName>
    </recommendedName>
    <alternativeName>
        <fullName>Antigen MZ2-BA</fullName>
    </alternativeName>
    <alternativeName>
        <fullName>Cancer/testis antigen 2.1</fullName>
        <shortName>CT2.1</shortName>
    </alternativeName>
</protein>
<comment type="function">
    <text>Unknown. Antigen recognized on a melanoma by autologous cytolytic T-lymphocytes.</text>
</comment>
<comment type="interaction">
    <interactant intactId="EBI-25884811">
        <id>Q13072</id>
    </interactant>
    <interactant intactId="EBI-399080">
        <id>Q92993</id>
        <label>KAT5</label>
    </interactant>
    <organismsDiffer>false</organismsDiffer>
    <experiments>3</experiments>
</comment>
<comment type="interaction">
    <interactant intactId="EBI-25884811">
        <id>Q13072</id>
    </interactant>
    <interactant intactId="EBI-11742507">
        <id>Q8TAP4-4</id>
        <label>LMO3</label>
    </interactant>
    <organismsDiffer>false</organismsDiffer>
    <experiments>3</experiments>
</comment>
<comment type="interaction">
    <interactant intactId="EBI-25884811">
        <id>Q13072</id>
    </interactant>
    <interactant intactId="EBI-1383528">
        <id>P17252</id>
        <label>PRKCA</label>
    </interactant>
    <organismsDiffer>false</organismsDiffer>
    <experiments>3</experiments>
</comment>
<comment type="interaction">
    <interactant intactId="EBI-25884811">
        <id>Q13072</id>
    </interactant>
    <interactant intactId="EBI-9090795">
        <id>Q15047-2</id>
        <label>SETDB1</label>
    </interactant>
    <organismsDiffer>false</organismsDiffer>
    <experiments>3</experiments>
</comment>
<comment type="interaction">
    <interactant intactId="EBI-25884811">
        <id>Q13072</id>
    </interactant>
    <interactant intactId="EBI-359832">
        <id>P61981</id>
        <label>YWHAG</label>
    </interactant>
    <organismsDiffer>false</organismsDiffer>
    <experiments>3</experiments>
</comment>
<comment type="subcellular location">
    <subcellularLocation>
        <location evidence="3">Secreted</location>
    </subcellularLocation>
</comment>
<comment type="alternative products">
    <event type="alternative splicing"/>
    <isoform>
        <id>Q13072-1</id>
        <name>1</name>
        <name>BAGE1a</name>
        <sequence type="displayed"/>
    </isoform>
    <text evidence="2">At least 6 different mRNAs, BAGE1a, BAGE1b, BAGE1c, BAGE1d, BAGE1e and BAGE1f, are produced by alternative splicing. They differ in the 3' region, but give rise to the same protein sequence.</text>
</comment>
<comment type="tissue specificity">
    <text>Not expressed in normal tissues, except in testis. Expressed with significant proportion in melanomas, but also in tumors of various histological origins, such as bladder carcinomas, head and neck squamous cell carcinomas, lung and breast carcinomas. Not expressed in renal, colorectal and prostatic carcinomas, leukemias and lymphomas. More frequently expressed in metastatic melanomas than in primary melanomas.</text>
</comment>
<comment type="miscellaneous">
    <text>The ancestral BAGE gene was generated by juxtacentromeric reshuffling of the KMT2C/MLL3 gene. The BAGE family was expanded by juxtacentromeric movement and/or acrocentric exchanges. BAGE family is composed of expressed genes that map to the juxtacentromeric regions of chromosomes 13 and 21 and of unexpressed gene fragments that scattered in the juxtacentromeric regions of several chromosomes, including chromosomes 9, 13, 18 and 21.</text>
</comment>
<comment type="similarity">
    <text evidence="3">Belongs to the BAGE family.</text>
</comment>
<accession>Q13072</accession>
<accession>A4IF47</accession>